<organism>
    <name type="scientific">Chlorobium chlorochromatii (strain CaD3)</name>
    <dbReference type="NCBI Taxonomy" id="340177"/>
    <lineage>
        <taxon>Bacteria</taxon>
        <taxon>Pseudomonadati</taxon>
        <taxon>Chlorobiota</taxon>
        <taxon>Chlorobiia</taxon>
        <taxon>Chlorobiales</taxon>
        <taxon>Chlorobiaceae</taxon>
        <taxon>Chlorobium/Pelodictyon group</taxon>
        <taxon>Chlorobium</taxon>
    </lineage>
</organism>
<name>BCHL_CHLCH</name>
<comment type="function">
    <text evidence="1">Component of the dark-operative protochlorophyllide reductase (DPOR) that uses Mg-ATP and reduced ferredoxin to reduce ring D of protochlorophyllide (Pchlide) to form chlorophyllide a (Chlide). This reaction is light-independent. The L component serves as a unique electron donor to the NB-component of the complex, and binds Mg-ATP.</text>
</comment>
<comment type="catalytic activity">
    <reaction evidence="1">
        <text>chlorophyllide a + oxidized 2[4Fe-4S]-[ferredoxin] + 2 ADP + 2 phosphate = protochlorophyllide a + reduced 2[4Fe-4S]-[ferredoxin] + 2 ATP + 2 H2O</text>
        <dbReference type="Rhea" id="RHEA:28202"/>
        <dbReference type="Rhea" id="RHEA-COMP:10002"/>
        <dbReference type="Rhea" id="RHEA-COMP:10004"/>
        <dbReference type="ChEBI" id="CHEBI:15377"/>
        <dbReference type="ChEBI" id="CHEBI:30616"/>
        <dbReference type="ChEBI" id="CHEBI:33722"/>
        <dbReference type="ChEBI" id="CHEBI:33723"/>
        <dbReference type="ChEBI" id="CHEBI:43474"/>
        <dbReference type="ChEBI" id="CHEBI:83348"/>
        <dbReference type="ChEBI" id="CHEBI:83350"/>
        <dbReference type="ChEBI" id="CHEBI:456216"/>
        <dbReference type="EC" id="1.3.7.7"/>
    </reaction>
</comment>
<comment type="cofactor">
    <cofactor evidence="1">
        <name>[4Fe-4S] cluster</name>
        <dbReference type="ChEBI" id="CHEBI:49883"/>
    </cofactor>
    <text evidence="1">Binds 1 [4Fe-4S] cluster per dimer.</text>
</comment>
<comment type="pathway">
    <text evidence="1">Porphyrin-containing compound metabolism; bacteriochlorophyll biosynthesis (light-independent).</text>
</comment>
<comment type="subunit">
    <text evidence="1">Homodimer. Protochlorophyllide reductase is composed of three subunits; BchL, BchN and BchB.</text>
</comment>
<comment type="similarity">
    <text evidence="1">Belongs to the NifH/BchL/ChlL family.</text>
</comment>
<sequence length="276" mass="29617">MSLVIAVYGKGGIGKSTTSANISAALALKGAKVLQIGCDPKHDSTFPITGKLQKTVIEALEEVDFHHEELSPEDVIESGFAGIDGLEAGGPPAGSGCGGYVVGESVTLLQEMGLYDKYDVILFDVLGDVVCGGFSAPLNYADYAIIIATNDFDSIFAANRLCMAIQQKSVRYKVKLAGIVANRVDYTTGGGTNMLDQFAEKVGTRLLAKVPYHEMIRKSRFAGKTLFAMEEAQTEFPECLAPYNEIADALMQEHPIASVPVPIGDRELFKLVNGWQ</sequence>
<feature type="chain" id="PRO_1000048462" description="Light-independent protochlorophyllide reductase iron-sulfur ATP-binding protein">
    <location>
        <begin position="1"/>
        <end position="276"/>
    </location>
</feature>
<feature type="binding site" evidence="1">
    <location>
        <begin position="12"/>
        <end position="17"/>
    </location>
    <ligand>
        <name>ATP</name>
        <dbReference type="ChEBI" id="CHEBI:30616"/>
    </ligand>
</feature>
<feature type="binding site" evidence="1">
    <location>
        <position position="16"/>
    </location>
    <ligand>
        <name>Mg(2+)</name>
        <dbReference type="ChEBI" id="CHEBI:18420"/>
    </ligand>
</feature>
<feature type="binding site" evidence="1">
    <location>
        <position position="41"/>
    </location>
    <ligand>
        <name>ATP</name>
        <dbReference type="ChEBI" id="CHEBI:30616"/>
    </ligand>
</feature>
<feature type="binding site" evidence="1">
    <location>
        <position position="97"/>
    </location>
    <ligand>
        <name>[4Fe-4S] cluster</name>
        <dbReference type="ChEBI" id="CHEBI:49883"/>
        <note>ligand shared between dimeric partners</note>
    </ligand>
</feature>
<feature type="binding site" evidence="1">
    <location>
        <position position="131"/>
    </location>
    <ligand>
        <name>[4Fe-4S] cluster</name>
        <dbReference type="ChEBI" id="CHEBI:49883"/>
        <note>ligand shared between dimeric partners</note>
    </ligand>
</feature>
<feature type="binding site" evidence="1">
    <location>
        <begin position="182"/>
        <end position="183"/>
    </location>
    <ligand>
        <name>ATP</name>
        <dbReference type="ChEBI" id="CHEBI:30616"/>
    </ligand>
</feature>
<dbReference type="EC" id="1.3.7.7" evidence="1"/>
<dbReference type="EMBL" id="CP000108">
    <property type="protein sequence ID" value="ABB29064.1"/>
    <property type="molecule type" value="Genomic_DNA"/>
</dbReference>
<dbReference type="SMR" id="Q3APL1"/>
<dbReference type="STRING" id="340177.Cag_1813"/>
<dbReference type="KEGG" id="cch:Cag_1813"/>
<dbReference type="eggNOG" id="COG1348">
    <property type="taxonomic scope" value="Bacteria"/>
</dbReference>
<dbReference type="HOGENOM" id="CLU_059373_2_0_10"/>
<dbReference type="OrthoDB" id="9778641at2"/>
<dbReference type="UniPathway" id="UPA00671"/>
<dbReference type="GO" id="GO:0051539">
    <property type="term" value="F:4 iron, 4 sulfur cluster binding"/>
    <property type="evidence" value="ECO:0007669"/>
    <property type="project" value="UniProtKB-UniRule"/>
</dbReference>
<dbReference type="GO" id="GO:0005524">
    <property type="term" value="F:ATP binding"/>
    <property type="evidence" value="ECO:0007669"/>
    <property type="project" value="UniProtKB-UniRule"/>
</dbReference>
<dbReference type="GO" id="GO:0046872">
    <property type="term" value="F:metal ion binding"/>
    <property type="evidence" value="ECO:0007669"/>
    <property type="project" value="UniProtKB-KW"/>
</dbReference>
<dbReference type="GO" id="GO:0016730">
    <property type="term" value="F:oxidoreductase activity, acting on iron-sulfur proteins as donors"/>
    <property type="evidence" value="ECO:0007669"/>
    <property type="project" value="InterPro"/>
</dbReference>
<dbReference type="GO" id="GO:0016636">
    <property type="term" value="F:oxidoreductase activity, acting on the CH-CH group of donors, iron-sulfur protein as acceptor"/>
    <property type="evidence" value="ECO:0007669"/>
    <property type="project" value="UniProtKB-UniRule"/>
</dbReference>
<dbReference type="GO" id="GO:0036070">
    <property type="term" value="P:light-independent bacteriochlorophyll biosynthetic process"/>
    <property type="evidence" value="ECO:0007669"/>
    <property type="project" value="UniProtKB-UniRule"/>
</dbReference>
<dbReference type="GO" id="GO:0019685">
    <property type="term" value="P:photosynthesis, dark reaction"/>
    <property type="evidence" value="ECO:0007669"/>
    <property type="project" value="InterPro"/>
</dbReference>
<dbReference type="Gene3D" id="3.40.50.300">
    <property type="entry name" value="P-loop containing nucleotide triphosphate hydrolases"/>
    <property type="match status" value="1"/>
</dbReference>
<dbReference type="HAMAP" id="MF_00355">
    <property type="entry name" value="ChlL_BchL"/>
    <property type="match status" value="1"/>
</dbReference>
<dbReference type="InterPro" id="IPR030655">
    <property type="entry name" value="NifH/chlL_CS"/>
</dbReference>
<dbReference type="InterPro" id="IPR000392">
    <property type="entry name" value="NifH/frxC"/>
</dbReference>
<dbReference type="InterPro" id="IPR027417">
    <property type="entry name" value="P-loop_NTPase"/>
</dbReference>
<dbReference type="InterPro" id="IPR005971">
    <property type="entry name" value="Protochlorophyllide_ATP-bd"/>
</dbReference>
<dbReference type="NCBIfam" id="TIGR01281">
    <property type="entry name" value="DPOR_bchL"/>
    <property type="match status" value="1"/>
</dbReference>
<dbReference type="PANTHER" id="PTHR42864">
    <property type="entry name" value="LIGHT-INDEPENDENT PROTOCHLOROPHYLLIDE REDUCTASE IRON-SULFUR ATP-BINDING PROTEIN"/>
    <property type="match status" value="1"/>
</dbReference>
<dbReference type="PANTHER" id="PTHR42864:SF2">
    <property type="entry name" value="LIGHT-INDEPENDENT PROTOCHLOROPHYLLIDE REDUCTASE IRON-SULFUR ATP-BINDING PROTEIN"/>
    <property type="match status" value="1"/>
</dbReference>
<dbReference type="Pfam" id="PF00142">
    <property type="entry name" value="Fer4_NifH"/>
    <property type="match status" value="1"/>
</dbReference>
<dbReference type="PIRSF" id="PIRSF000363">
    <property type="entry name" value="Nitrogenase_iron"/>
    <property type="match status" value="1"/>
</dbReference>
<dbReference type="PRINTS" id="PR00091">
    <property type="entry name" value="NITROGNASEII"/>
</dbReference>
<dbReference type="SUPFAM" id="SSF52540">
    <property type="entry name" value="P-loop containing nucleoside triphosphate hydrolases"/>
    <property type="match status" value="1"/>
</dbReference>
<dbReference type="PROSITE" id="PS00746">
    <property type="entry name" value="NIFH_FRXC_1"/>
    <property type="match status" value="1"/>
</dbReference>
<dbReference type="PROSITE" id="PS00692">
    <property type="entry name" value="NIFH_FRXC_2"/>
    <property type="match status" value="1"/>
</dbReference>
<dbReference type="PROSITE" id="PS51026">
    <property type="entry name" value="NIFH_FRXC_3"/>
    <property type="match status" value="1"/>
</dbReference>
<proteinExistence type="inferred from homology"/>
<protein>
    <recommendedName>
        <fullName evidence="1">Light-independent protochlorophyllide reductase iron-sulfur ATP-binding protein</fullName>
        <shortName evidence="1">DPOR subunit L</shortName>
        <shortName evidence="1">LI-POR subunit L</shortName>
        <ecNumber evidence="1">1.3.7.7</ecNumber>
    </recommendedName>
</protein>
<keyword id="KW-0004">4Fe-4S</keyword>
<keyword id="KW-0067">ATP-binding</keyword>
<keyword id="KW-0077">Bacteriochlorophyll biosynthesis</keyword>
<keyword id="KW-0149">Chlorophyll biosynthesis</keyword>
<keyword id="KW-0408">Iron</keyword>
<keyword id="KW-0411">Iron-sulfur</keyword>
<keyword id="KW-0460">Magnesium</keyword>
<keyword id="KW-0479">Metal-binding</keyword>
<keyword id="KW-0547">Nucleotide-binding</keyword>
<keyword id="KW-0560">Oxidoreductase</keyword>
<keyword id="KW-0602">Photosynthesis</keyword>
<evidence type="ECO:0000255" key="1">
    <source>
        <dbReference type="HAMAP-Rule" id="MF_00355"/>
    </source>
</evidence>
<accession>Q3APL1</accession>
<reference key="1">
    <citation type="submission" date="2005-08" db="EMBL/GenBank/DDBJ databases">
        <title>Complete sequence of Chlorobium chlorochromatii CaD3.</title>
        <authorList>
            <consortium name="US DOE Joint Genome Institute"/>
            <person name="Copeland A."/>
            <person name="Lucas S."/>
            <person name="Lapidus A."/>
            <person name="Barry K."/>
            <person name="Detter J.C."/>
            <person name="Glavina T."/>
            <person name="Hammon N."/>
            <person name="Israni S."/>
            <person name="Pitluck S."/>
            <person name="Bryant D."/>
            <person name="Schmutz J."/>
            <person name="Larimer F."/>
            <person name="Land M."/>
            <person name="Kyrpides N."/>
            <person name="Ivanova N."/>
            <person name="Richardson P."/>
        </authorList>
    </citation>
    <scope>NUCLEOTIDE SEQUENCE [LARGE SCALE GENOMIC DNA]</scope>
    <source>
        <strain>CaD3</strain>
    </source>
</reference>
<gene>
    <name evidence="1" type="primary">bchL</name>
    <name type="ordered locus">Cag_1813</name>
</gene>